<keyword id="KW-1185">Reference proteome</keyword>
<keyword id="KW-0687">Ribonucleoprotein</keyword>
<keyword id="KW-0689">Ribosomal protein</keyword>
<proteinExistence type="inferred from homology"/>
<accession>A0B8P7</accession>
<reference key="1">
    <citation type="submission" date="2006-10" db="EMBL/GenBank/DDBJ databases">
        <title>Complete sequence of Methanosaeta thermophila PT.</title>
        <authorList>
            <consortium name="US DOE Joint Genome Institute"/>
            <person name="Copeland A."/>
            <person name="Lucas S."/>
            <person name="Lapidus A."/>
            <person name="Barry K."/>
            <person name="Detter J.C."/>
            <person name="Glavina del Rio T."/>
            <person name="Hammon N."/>
            <person name="Israni S."/>
            <person name="Pitluck S."/>
            <person name="Chain P."/>
            <person name="Malfatti S."/>
            <person name="Shin M."/>
            <person name="Vergez L."/>
            <person name="Schmutz J."/>
            <person name="Larimer F."/>
            <person name="Land M."/>
            <person name="Hauser L."/>
            <person name="Kyrpides N."/>
            <person name="Kim E."/>
            <person name="Smith K.S."/>
            <person name="Ingram-Smith C."/>
            <person name="Richardson P."/>
        </authorList>
    </citation>
    <scope>NUCLEOTIDE SEQUENCE [LARGE SCALE GENOMIC DNA]</scope>
    <source>
        <strain>DSM 6194 / JCM 14653 / NBRC 101360 / PT</strain>
    </source>
</reference>
<protein>
    <recommendedName>
        <fullName evidence="1">Small ribosomal subunit protein eS8</fullName>
    </recommendedName>
    <alternativeName>
        <fullName evidence="3">30S ribosomal protein S8e</fullName>
    </alternativeName>
</protein>
<feature type="chain" id="PRO_0000304173" description="Small ribosomal subunit protein eS8">
    <location>
        <begin position="1"/>
        <end position="127"/>
    </location>
</feature>
<feature type="region of interest" description="Disordered" evidence="2">
    <location>
        <begin position="1"/>
        <end position="24"/>
    </location>
</feature>
<gene>
    <name evidence="1" type="primary">rps8e</name>
    <name type="ordered locus">Mthe_1293</name>
</gene>
<comment type="subunit">
    <text evidence="1">Part of the 30S ribosomal subunit.</text>
</comment>
<comment type="similarity">
    <text evidence="1">Belongs to the eukaryotic ribosomal protein eS8 family.</text>
</comment>
<sequence length="127" mass="13960">MKWQGKSARKPTGGRLVPARGKRKYELGREPAETLVGPIRVKKIRTRGGNQKLRLLKADVASVSDPVTGATKLVKIETVVDNPANRHYVRRNIITRGAVIRTEIGEARVLSRPGQDGVVNAVLLPKH</sequence>
<organism>
    <name type="scientific">Methanothrix thermoacetophila (strain DSM 6194 / JCM 14653 / NBRC 101360 / PT)</name>
    <name type="common">Methanosaeta thermophila</name>
    <dbReference type="NCBI Taxonomy" id="349307"/>
    <lineage>
        <taxon>Archaea</taxon>
        <taxon>Methanobacteriati</taxon>
        <taxon>Methanobacteriota</taxon>
        <taxon>Stenosarchaea group</taxon>
        <taxon>Methanomicrobia</taxon>
        <taxon>Methanotrichales</taxon>
        <taxon>Methanotrichaceae</taxon>
        <taxon>Methanothrix</taxon>
    </lineage>
</organism>
<dbReference type="EMBL" id="CP000477">
    <property type="protein sequence ID" value="ABK15071.1"/>
    <property type="molecule type" value="Genomic_DNA"/>
</dbReference>
<dbReference type="RefSeq" id="WP_011696463.1">
    <property type="nucleotide sequence ID" value="NC_008553.1"/>
</dbReference>
<dbReference type="SMR" id="A0B8P7"/>
<dbReference type="STRING" id="349307.Mthe_1293"/>
<dbReference type="GeneID" id="4462934"/>
<dbReference type="KEGG" id="mtp:Mthe_1293"/>
<dbReference type="HOGENOM" id="CLU_080597_2_1_2"/>
<dbReference type="OrthoDB" id="372305at2157"/>
<dbReference type="Proteomes" id="UP000000674">
    <property type="component" value="Chromosome"/>
</dbReference>
<dbReference type="GO" id="GO:1990904">
    <property type="term" value="C:ribonucleoprotein complex"/>
    <property type="evidence" value="ECO:0007669"/>
    <property type="project" value="UniProtKB-KW"/>
</dbReference>
<dbReference type="GO" id="GO:0005840">
    <property type="term" value="C:ribosome"/>
    <property type="evidence" value="ECO:0007669"/>
    <property type="project" value="UniProtKB-KW"/>
</dbReference>
<dbReference type="GO" id="GO:0003735">
    <property type="term" value="F:structural constituent of ribosome"/>
    <property type="evidence" value="ECO:0007669"/>
    <property type="project" value="InterPro"/>
</dbReference>
<dbReference type="GO" id="GO:0006412">
    <property type="term" value="P:translation"/>
    <property type="evidence" value="ECO:0007669"/>
    <property type="project" value="UniProtKB-UniRule"/>
</dbReference>
<dbReference type="CDD" id="cd11382">
    <property type="entry name" value="Ribosomal_S8e"/>
    <property type="match status" value="1"/>
</dbReference>
<dbReference type="FunFam" id="2.40.10.310:FF:000002">
    <property type="entry name" value="30S ribosomal protein S8e"/>
    <property type="match status" value="1"/>
</dbReference>
<dbReference type="Gene3D" id="2.40.10.310">
    <property type="match status" value="1"/>
</dbReference>
<dbReference type="HAMAP" id="MF_00029">
    <property type="entry name" value="Ribosomal_eS8"/>
    <property type="match status" value="1"/>
</dbReference>
<dbReference type="InterPro" id="IPR001047">
    <property type="entry name" value="Ribosomal_eS8"/>
</dbReference>
<dbReference type="InterPro" id="IPR018283">
    <property type="entry name" value="Ribosomal_eS8_CS"/>
</dbReference>
<dbReference type="InterPro" id="IPR020919">
    <property type="entry name" value="Ribosomal_protein_eS8_arc"/>
</dbReference>
<dbReference type="InterPro" id="IPR022309">
    <property type="entry name" value="Ribosomal_Se8/biogenesis_NSA2"/>
</dbReference>
<dbReference type="NCBIfam" id="TIGR00307">
    <property type="entry name" value="eS8"/>
    <property type="match status" value="1"/>
</dbReference>
<dbReference type="PANTHER" id="PTHR10394">
    <property type="entry name" value="40S RIBOSOMAL PROTEIN S8"/>
    <property type="match status" value="1"/>
</dbReference>
<dbReference type="Pfam" id="PF01201">
    <property type="entry name" value="Ribosomal_S8e"/>
    <property type="match status" value="1"/>
</dbReference>
<dbReference type="PROSITE" id="PS01193">
    <property type="entry name" value="RIBOSOMAL_S8E"/>
    <property type="match status" value="1"/>
</dbReference>
<name>RS8E_METTP</name>
<evidence type="ECO:0000255" key="1">
    <source>
        <dbReference type="HAMAP-Rule" id="MF_00029"/>
    </source>
</evidence>
<evidence type="ECO:0000256" key="2">
    <source>
        <dbReference type="SAM" id="MobiDB-lite"/>
    </source>
</evidence>
<evidence type="ECO:0000305" key="3"/>